<keyword id="KW-1003">Cell membrane</keyword>
<keyword id="KW-0472">Membrane</keyword>
<keyword id="KW-0812">Transmembrane</keyword>
<keyword id="KW-1133">Transmembrane helix</keyword>
<reference key="1">
    <citation type="journal article" date="2005" name="J. Bacteriol.">
        <title>Whole-genome sequencing of Staphylococcus haemolyticus uncovers the extreme plasticity of its genome and the evolution of human-colonizing staphylococcal species.</title>
        <authorList>
            <person name="Takeuchi F."/>
            <person name="Watanabe S."/>
            <person name="Baba T."/>
            <person name="Yuzawa H."/>
            <person name="Ito T."/>
            <person name="Morimoto Y."/>
            <person name="Kuroda M."/>
            <person name="Cui L."/>
            <person name="Takahashi M."/>
            <person name="Ankai A."/>
            <person name="Baba S."/>
            <person name="Fukui S."/>
            <person name="Lee J.C."/>
            <person name="Hiramatsu K."/>
        </authorList>
    </citation>
    <scope>NUCLEOTIDE SEQUENCE [LARGE SCALE GENOMIC DNA]</scope>
    <source>
        <strain>JCSC1435</strain>
    </source>
</reference>
<organism>
    <name type="scientific">Staphylococcus haemolyticus (strain JCSC1435)</name>
    <dbReference type="NCBI Taxonomy" id="279808"/>
    <lineage>
        <taxon>Bacteria</taxon>
        <taxon>Bacillati</taxon>
        <taxon>Bacillota</taxon>
        <taxon>Bacilli</taxon>
        <taxon>Bacillales</taxon>
        <taxon>Staphylococcaceae</taxon>
        <taxon>Staphylococcus</taxon>
    </lineage>
</organism>
<name>FLOA_STAHJ</name>
<evidence type="ECO:0000255" key="1">
    <source>
        <dbReference type="HAMAP-Rule" id="MF_01562"/>
    </source>
</evidence>
<feature type="chain" id="PRO_0000232568" description="Flotillin-like protein FloA">
    <location>
        <begin position="1"/>
        <end position="328"/>
    </location>
</feature>
<feature type="transmembrane region" description="Helical" evidence="1">
    <location>
        <begin position="1"/>
        <end position="21"/>
    </location>
</feature>
<feature type="transmembrane region" description="Helical" evidence="1">
    <location>
        <begin position="26"/>
        <end position="46"/>
    </location>
</feature>
<gene>
    <name evidence="1" type="primary">floA</name>
    <name type="ordered locus">SH1343</name>
</gene>
<dbReference type="EMBL" id="AP006716">
    <property type="protein sequence ID" value="BAE04652.1"/>
    <property type="molecule type" value="Genomic_DNA"/>
</dbReference>
<dbReference type="RefSeq" id="WP_011275639.1">
    <property type="nucleotide sequence ID" value="NC_007168.1"/>
</dbReference>
<dbReference type="SMR" id="Q4L6S3"/>
<dbReference type="GeneID" id="93780743"/>
<dbReference type="KEGG" id="sha:SH1343"/>
<dbReference type="eggNOG" id="COG4864">
    <property type="taxonomic scope" value="Bacteria"/>
</dbReference>
<dbReference type="HOGENOM" id="CLU_836378_0_0_9"/>
<dbReference type="OrthoDB" id="9808365at2"/>
<dbReference type="Proteomes" id="UP000000543">
    <property type="component" value="Chromosome"/>
</dbReference>
<dbReference type="GO" id="GO:0045121">
    <property type="term" value="C:membrane raft"/>
    <property type="evidence" value="ECO:0007669"/>
    <property type="project" value="UniProtKB-SubCell"/>
</dbReference>
<dbReference type="GO" id="GO:0005886">
    <property type="term" value="C:plasma membrane"/>
    <property type="evidence" value="ECO:0007669"/>
    <property type="project" value="UniProtKB-SubCell"/>
</dbReference>
<dbReference type="HAMAP" id="MF_01562">
    <property type="entry name" value="FloA"/>
    <property type="match status" value="1"/>
</dbReference>
<dbReference type="InterPro" id="IPR022853">
    <property type="entry name" value="FloA"/>
</dbReference>
<dbReference type="NCBIfam" id="NF010186">
    <property type="entry name" value="PRK13665.1"/>
    <property type="match status" value="1"/>
</dbReference>
<dbReference type="Pfam" id="PF12127">
    <property type="entry name" value="FloA"/>
    <property type="match status" value="1"/>
</dbReference>
<accession>Q4L6S3</accession>
<protein>
    <recommendedName>
        <fullName evidence="1">Flotillin-like protein FloA</fullName>
    </recommendedName>
</protein>
<comment type="function">
    <text evidence="1">Found in functional membrane microdomains (FMM) that may be equivalent to eukaryotic membrane rafts. FMMs are highly dynamic and increase in number as cells age. Flotillins are thought to be important factors in membrane fluidity.</text>
</comment>
<comment type="subunit">
    <text evidence="1">Homooligomerizes.</text>
</comment>
<comment type="subcellular location">
    <subcellularLocation>
        <location evidence="1">Cell membrane</location>
        <topology evidence="1">Multi-pass membrane protein</topology>
    </subcellularLocation>
    <subcellularLocation>
        <location evidence="1">Membrane raft</location>
        <topology evidence="1">Multi-pass membrane protein</topology>
    </subcellularLocation>
</comment>
<comment type="similarity">
    <text evidence="1">Belongs to the flotillin-like FloA family.</text>
</comment>
<sequence length="328" mass="35030">MFGLGIIVIAVIIVIALLVLFSFVPVGLWISAIAAGVKVGIGTLVGMRLRRVSPRKVIGPLIKAHKAGLNLTTNQLESHYLAGGNVDRVVDANIAAQRADINLPFERGAAIDLAGRDVLEAVQMSVNPKVIETPFITGVAMNGIEVKAKARITVRANISRLVGGSGEETIIARVGEGIVSTIGSSEHHTQVLENPDNISKTVLSKGLDSGTAFEILSIDIADVDIGKNIGADLQTEQALADKNIAQAKAEERRAMAVASEQEMKARVQEMRAKVVEAESEVPLAMAEALREGNLGVKDYYNLKNVEADTGMRNAINKRTEQNEDESPK</sequence>
<proteinExistence type="inferred from homology"/>